<evidence type="ECO:0000255" key="1">
    <source>
        <dbReference type="HAMAP-Rule" id="MF_00068"/>
    </source>
</evidence>
<name>MURQ_FRATN</name>
<feature type="chain" id="PRO_1000009117" description="N-acetylmuramic acid 6-phosphate etherase">
    <location>
        <begin position="1"/>
        <end position="294"/>
    </location>
</feature>
<feature type="domain" description="SIS" evidence="1">
    <location>
        <begin position="56"/>
        <end position="219"/>
    </location>
</feature>
<feature type="active site" description="Proton donor" evidence="1">
    <location>
        <position position="84"/>
    </location>
</feature>
<feature type="active site" evidence="1">
    <location>
        <position position="115"/>
    </location>
</feature>
<accession>A0Q804</accession>
<proteinExistence type="inferred from homology"/>
<sequence>MNILENINTEKRNPRSLHLDSMSIAEAVSLMIDEEYGVIEALKEQHRNITEVILATSYSLKNGGRIVYIGAGTSGRLGILDAVECPPTFSVDYNTIVGLIAGGEKAFIQAQEGAEDDANFGKEDLQSINLTAKDIVVGIAASGRTPYVIGALEYANSIGATTVAISCTKQAKISKYAKYSIEAVPGPEVLTGSTRLKAGTTQKLILNMISTLSMVSVGKVYQNLMVDVKPTNQKLIERSKNIICEATGVDYTTAEKFYLKANKSVKVAIVMILNDCDYEKALAILKNNNNFIKS</sequence>
<reference key="1">
    <citation type="journal article" date="2007" name="Genome Biol.">
        <title>Comparison of Francisella tularensis genomes reveals evolutionary events associated with the emergence of human pathogenic strains.</title>
        <authorList>
            <person name="Rohmer L."/>
            <person name="Fong C."/>
            <person name="Abmayr S."/>
            <person name="Wasnick M."/>
            <person name="Larson Freeman T.J."/>
            <person name="Radey M."/>
            <person name="Guina T."/>
            <person name="Svensson K."/>
            <person name="Hayden H.S."/>
            <person name="Jacobs M."/>
            <person name="Gallagher L.A."/>
            <person name="Manoil C."/>
            <person name="Ernst R.K."/>
            <person name="Drees B."/>
            <person name="Buckley D."/>
            <person name="Haugen E."/>
            <person name="Bovee D."/>
            <person name="Zhou Y."/>
            <person name="Chang J."/>
            <person name="Levy R."/>
            <person name="Lim R."/>
            <person name="Gillett W."/>
            <person name="Guenthener D."/>
            <person name="Kang A."/>
            <person name="Shaffer S.A."/>
            <person name="Taylor G."/>
            <person name="Chen J."/>
            <person name="Gallis B."/>
            <person name="D'Argenio D.A."/>
            <person name="Forsman M."/>
            <person name="Olson M.V."/>
            <person name="Goodlett D.R."/>
            <person name="Kaul R."/>
            <person name="Miller S.I."/>
            <person name="Brittnacher M.J."/>
        </authorList>
    </citation>
    <scope>NUCLEOTIDE SEQUENCE [LARGE SCALE GENOMIC DNA]</scope>
    <source>
        <strain>U112</strain>
    </source>
</reference>
<protein>
    <recommendedName>
        <fullName evidence="1">N-acetylmuramic acid 6-phosphate etherase</fullName>
        <shortName evidence="1">MurNAc-6-P etherase</shortName>
        <ecNumber evidence="1">4.2.1.126</ecNumber>
    </recommendedName>
    <alternativeName>
        <fullName evidence="1">N-acetylmuramic acid 6-phosphate hydrolase</fullName>
    </alternativeName>
    <alternativeName>
        <fullName evidence="1">N-acetylmuramic acid 6-phosphate lyase</fullName>
    </alternativeName>
</protein>
<comment type="function">
    <text evidence="1">Specifically catalyzes the cleavage of the D-lactyl ether substituent of MurNAc 6-phosphate, producing GlcNAc 6-phosphate and D-lactate. Together with AnmK, is also required for the utilization of anhydro-N-acetylmuramic acid (anhMurNAc) either imported from the medium or derived from its own cell wall murein, and thus plays a role in cell wall recycling.</text>
</comment>
<comment type="catalytic activity">
    <reaction evidence="1">
        <text>N-acetyl-D-muramate 6-phosphate + H2O = N-acetyl-D-glucosamine 6-phosphate + (R)-lactate</text>
        <dbReference type="Rhea" id="RHEA:26410"/>
        <dbReference type="ChEBI" id="CHEBI:15377"/>
        <dbReference type="ChEBI" id="CHEBI:16004"/>
        <dbReference type="ChEBI" id="CHEBI:57513"/>
        <dbReference type="ChEBI" id="CHEBI:58722"/>
        <dbReference type="EC" id="4.2.1.126"/>
    </reaction>
</comment>
<comment type="pathway">
    <text evidence="1">Amino-sugar metabolism; 1,6-anhydro-N-acetylmuramate degradation.</text>
</comment>
<comment type="pathway">
    <text evidence="1">Amino-sugar metabolism; N-acetylmuramate degradation.</text>
</comment>
<comment type="pathway">
    <text evidence="1">Cell wall biogenesis; peptidoglycan recycling.</text>
</comment>
<comment type="subunit">
    <text evidence="1">Homodimer.</text>
</comment>
<comment type="miscellaneous">
    <text evidence="1">A lyase-type mechanism (elimination/hydration) is suggested for the cleavage of the lactyl ether bond of MurNAc 6-phosphate, with the formation of an alpha,beta-unsaturated aldehyde intermediate with (E)-stereochemistry, followed by the syn addition of water to give product.</text>
</comment>
<comment type="similarity">
    <text evidence="1">Belongs to the GCKR-like family. MurNAc-6-P etherase subfamily.</text>
</comment>
<gene>
    <name evidence="1" type="primary">murQ</name>
    <name type="ordered locus">FTN_1504</name>
</gene>
<dbReference type="EC" id="4.2.1.126" evidence="1"/>
<dbReference type="EMBL" id="CP000439">
    <property type="protein sequence ID" value="ABK90369.1"/>
    <property type="molecule type" value="Genomic_DNA"/>
</dbReference>
<dbReference type="RefSeq" id="WP_003040499.1">
    <property type="nucleotide sequence ID" value="NC_008601.1"/>
</dbReference>
<dbReference type="SMR" id="A0Q804"/>
<dbReference type="KEGG" id="ftn:FTN_1504"/>
<dbReference type="KEGG" id="ftx:AW25_497"/>
<dbReference type="BioCyc" id="FTUL401614:G1G75-1552-MONOMER"/>
<dbReference type="UniPathway" id="UPA00342"/>
<dbReference type="UniPathway" id="UPA00343"/>
<dbReference type="UniPathway" id="UPA00544"/>
<dbReference type="Proteomes" id="UP000000762">
    <property type="component" value="Chromosome"/>
</dbReference>
<dbReference type="GO" id="GO:0097367">
    <property type="term" value="F:carbohydrate derivative binding"/>
    <property type="evidence" value="ECO:0007669"/>
    <property type="project" value="InterPro"/>
</dbReference>
<dbReference type="GO" id="GO:0016835">
    <property type="term" value="F:carbon-oxygen lyase activity"/>
    <property type="evidence" value="ECO:0007669"/>
    <property type="project" value="UniProtKB-UniRule"/>
</dbReference>
<dbReference type="GO" id="GO:0016803">
    <property type="term" value="F:ether hydrolase activity"/>
    <property type="evidence" value="ECO:0007669"/>
    <property type="project" value="TreeGrafter"/>
</dbReference>
<dbReference type="GO" id="GO:0097175">
    <property type="term" value="P:1,6-anhydro-N-acetyl-beta-muramic acid catabolic process"/>
    <property type="evidence" value="ECO:0007669"/>
    <property type="project" value="UniProtKB-UniRule"/>
</dbReference>
<dbReference type="GO" id="GO:0046348">
    <property type="term" value="P:amino sugar catabolic process"/>
    <property type="evidence" value="ECO:0007669"/>
    <property type="project" value="InterPro"/>
</dbReference>
<dbReference type="GO" id="GO:0097173">
    <property type="term" value="P:N-acetylmuramic acid catabolic process"/>
    <property type="evidence" value="ECO:0007669"/>
    <property type="project" value="UniProtKB-UniPathway"/>
</dbReference>
<dbReference type="GO" id="GO:0009254">
    <property type="term" value="P:peptidoglycan turnover"/>
    <property type="evidence" value="ECO:0007669"/>
    <property type="project" value="UniProtKB-UniRule"/>
</dbReference>
<dbReference type="CDD" id="cd05007">
    <property type="entry name" value="SIS_Etherase"/>
    <property type="match status" value="1"/>
</dbReference>
<dbReference type="FunFam" id="1.10.8.1080:FF:000001">
    <property type="entry name" value="N-acetylmuramic acid 6-phosphate etherase"/>
    <property type="match status" value="1"/>
</dbReference>
<dbReference type="FunFam" id="3.40.50.10490:FF:000014">
    <property type="entry name" value="N-acetylmuramic acid 6-phosphate etherase"/>
    <property type="match status" value="1"/>
</dbReference>
<dbReference type="Gene3D" id="1.10.8.1080">
    <property type="match status" value="1"/>
</dbReference>
<dbReference type="Gene3D" id="3.40.50.10490">
    <property type="entry name" value="Glucose-6-phosphate isomerase like protein, domain 1"/>
    <property type="match status" value="1"/>
</dbReference>
<dbReference type="HAMAP" id="MF_00068">
    <property type="entry name" value="MurQ"/>
    <property type="match status" value="1"/>
</dbReference>
<dbReference type="InterPro" id="IPR005488">
    <property type="entry name" value="Etherase_MurQ"/>
</dbReference>
<dbReference type="InterPro" id="IPR005486">
    <property type="entry name" value="Glucokinase_regulatory_CS"/>
</dbReference>
<dbReference type="InterPro" id="IPR040190">
    <property type="entry name" value="MURQ/GCKR"/>
</dbReference>
<dbReference type="InterPro" id="IPR001347">
    <property type="entry name" value="SIS_dom"/>
</dbReference>
<dbReference type="InterPro" id="IPR046348">
    <property type="entry name" value="SIS_dom_sf"/>
</dbReference>
<dbReference type="NCBIfam" id="TIGR00274">
    <property type="entry name" value="N-acetylmuramic acid 6-phosphate etherase"/>
    <property type="match status" value="1"/>
</dbReference>
<dbReference type="NCBIfam" id="NF003915">
    <property type="entry name" value="PRK05441.1"/>
    <property type="match status" value="1"/>
</dbReference>
<dbReference type="NCBIfam" id="NF009222">
    <property type="entry name" value="PRK12570.1"/>
    <property type="match status" value="1"/>
</dbReference>
<dbReference type="PANTHER" id="PTHR10088">
    <property type="entry name" value="GLUCOKINASE REGULATORY PROTEIN"/>
    <property type="match status" value="1"/>
</dbReference>
<dbReference type="PANTHER" id="PTHR10088:SF4">
    <property type="entry name" value="GLUCOKINASE REGULATORY PROTEIN"/>
    <property type="match status" value="1"/>
</dbReference>
<dbReference type="Pfam" id="PF22645">
    <property type="entry name" value="GKRP_SIS_N"/>
    <property type="match status" value="1"/>
</dbReference>
<dbReference type="SUPFAM" id="SSF53697">
    <property type="entry name" value="SIS domain"/>
    <property type="match status" value="1"/>
</dbReference>
<dbReference type="PROSITE" id="PS01272">
    <property type="entry name" value="GCKR"/>
    <property type="match status" value="1"/>
</dbReference>
<dbReference type="PROSITE" id="PS51464">
    <property type="entry name" value="SIS"/>
    <property type="match status" value="1"/>
</dbReference>
<organism>
    <name type="scientific">Francisella tularensis subsp. novicida (strain U112)</name>
    <dbReference type="NCBI Taxonomy" id="401614"/>
    <lineage>
        <taxon>Bacteria</taxon>
        <taxon>Pseudomonadati</taxon>
        <taxon>Pseudomonadota</taxon>
        <taxon>Gammaproteobacteria</taxon>
        <taxon>Thiotrichales</taxon>
        <taxon>Francisellaceae</taxon>
        <taxon>Francisella</taxon>
    </lineage>
</organism>
<keyword id="KW-0119">Carbohydrate metabolism</keyword>
<keyword id="KW-0456">Lyase</keyword>